<protein>
    <recommendedName>
        <fullName evidence="2">Septation ring formation regulator EzrA</fullName>
    </recommendedName>
</protein>
<evidence type="ECO:0000255" key="1"/>
<evidence type="ECO:0000255" key="2">
    <source>
        <dbReference type="HAMAP-Rule" id="MF_00728"/>
    </source>
</evidence>
<evidence type="ECO:0000269" key="3">
    <source>
    </source>
</evidence>
<evidence type="ECO:0000269" key="4">
    <source>
    </source>
</evidence>
<evidence type="ECO:0000269" key="5">
    <source>
    </source>
</evidence>
<evidence type="ECO:0000269" key="6">
    <source>
    </source>
</evidence>
<evidence type="ECO:0000269" key="7">
    <source>
    </source>
</evidence>
<evidence type="ECO:0000303" key="8">
    <source>
    </source>
</evidence>
<evidence type="ECO:0000305" key="9"/>
<evidence type="ECO:0000305" key="10">
    <source>
    </source>
</evidence>
<evidence type="ECO:0000305" key="11">
    <source>
    </source>
</evidence>
<proteinExistence type="evidence at protein level"/>
<dbReference type="EMBL" id="AF008220">
    <property type="protein sequence ID" value="AAC00306.1"/>
    <property type="molecule type" value="Genomic_DNA"/>
</dbReference>
<dbReference type="EMBL" id="AL009126">
    <property type="protein sequence ID" value="CAB14939.1"/>
    <property type="molecule type" value="Genomic_DNA"/>
</dbReference>
<dbReference type="PIR" id="G70002">
    <property type="entry name" value="G70002"/>
</dbReference>
<dbReference type="RefSeq" id="NP_390839.1">
    <property type="nucleotide sequence ID" value="NC_000964.3"/>
</dbReference>
<dbReference type="RefSeq" id="WP_003229320.1">
    <property type="nucleotide sequence ID" value="NZ_OZ025638.1"/>
</dbReference>
<dbReference type="PDB" id="4UXV">
    <property type="method" value="X-ray"/>
    <property type="resolution" value="3.96 A"/>
    <property type="chains" value="A=22-562"/>
</dbReference>
<dbReference type="PDBsum" id="4UXV"/>
<dbReference type="SMR" id="O34894"/>
<dbReference type="FunCoup" id="O34894">
    <property type="interactions" value="19"/>
</dbReference>
<dbReference type="IntAct" id="O34894">
    <property type="interactions" value="10"/>
</dbReference>
<dbReference type="STRING" id="224308.BSU29610"/>
<dbReference type="jPOST" id="O34894"/>
<dbReference type="PaxDb" id="224308-BSU29610"/>
<dbReference type="EnsemblBacteria" id="CAB14939">
    <property type="protein sequence ID" value="CAB14939"/>
    <property type="gene ID" value="BSU_29610"/>
</dbReference>
<dbReference type="GeneID" id="937337"/>
<dbReference type="KEGG" id="bsu:BSU29610"/>
<dbReference type="PATRIC" id="fig|224308.179.peg.3217"/>
<dbReference type="eggNOG" id="COG4477">
    <property type="taxonomic scope" value="Bacteria"/>
</dbReference>
<dbReference type="InParanoid" id="O34894"/>
<dbReference type="OrthoDB" id="1654473at2"/>
<dbReference type="PhylomeDB" id="O34894"/>
<dbReference type="BioCyc" id="BSUB:BSU29610-MONOMER"/>
<dbReference type="EvolutionaryTrace" id="O34894"/>
<dbReference type="Proteomes" id="UP000001570">
    <property type="component" value="Chromosome"/>
</dbReference>
<dbReference type="GO" id="GO:0045121">
    <property type="term" value="C:membrane raft"/>
    <property type="evidence" value="ECO:0007669"/>
    <property type="project" value="UniProtKB-SubCell"/>
</dbReference>
<dbReference type="GO" id="GO:0005886">
    <property type="term" value="C:plasma membrane"/>
    <property type="evidence" value="ECO:0007669"/>
    <property type="project" value="UniProtKB-SubCell"/>
</dbReference>
<dbReference type="GO" id="GO:0005940">
    <property type="term" value="C:septin ring"/>
    <property type="evidence" value="ECO:0007669"/>
    <property type="project" value="InterPro"/>
</dbReference>
<dbReference type="GO" id="GO:0000917">
    <property type="term" value="P:division septum assembly"/>
    <property type="evidence" value="ECO:0007669"/>
    <property type="project" value="UniProtKB-KW"/>
</dbReference>
<dbReference type="GO" id="GO:0051781">
    <property type="term" value="P:positive regulation of cell division"/>
    <property type="evidence" value="ECO:0000315"/>
    <property type="project" value="CACAO"/>
</dbReference>
<dbReference type="GO" id="GO:0000921">
    <property type="term" value="P:septin ring assembly"/>
    <property type="evidence" value="ECO:0000315"/>
    <property type="project" value="CACAO"/>
</dbReference>
<dbReference type="HAMAP" id="MF_00728">
    <property type="entry name" value="EzrA"/>
    <property type="match status" value="1"/>
</dbReference>
<dbReference type="InterPro" id="IPR010379">
    <property type="entry name" value="EzrA"/>
</dbReference>
<dbReference type="NCBIfam" id="NF003413">
    <property type="entry name" value="PRK04778.1-7"/>
    <property type="match status" value="1"/>
</dbReference>
<dbReference type="Pfam" id="PF06160">
    <property type="entry name" value="EzrA"/>
    <property type="match status" value="1"/>
</dbReference>
<sequence length="562" mass="64996">MEFVIGLLIVLLALFAAGYFFRKKIYAEIDRLESWKIEILNRSIVEEMSKIKHLKMTGQTEEFFEKWREEWDEIVTAHMPKVEELLYDAEENADKYRFKKANQVLVHIDDLLTAAESSIEKILREISDLVTSEEKSREEIEQVRERYSKSRKNLLAYSHLYGELYDSLEKDLDEIWSGIKQFEEETEGGNYITARKVLLEQDRNLERLQSYIDDVPKLLADCKQTVPGQIAKLKDGYGEMKEKGYKLEHIQLDKELENLSNQLKRAEHVLMTELDIDEASAILQLIDENIQSVYQQLEGEVEAGQSVLSKMPELIIAYDKLKEEKEHTKAETELVKESYRLTAGELGKQQAFEKRLDEIGKLLSSVKDKLDAEHVAYSLLVEEVASIEKQIEEVKKEHAEYRENLQALRKEELQARETLSNLKKTISETARLLKTSNIPGIPSHIQEMLENAHHHIQETVNQLNELPLNMEEAGAHLKQAEDIVNRASRESEELVEQVILIEKIIQFGNRFRSQNHILSEQLKEAERRFYAFDYDDSYEIAAAAVEKAAPGAVEKIKADISA</sequence>
<comment type="function">
    <text evidence="3">Negative regulator of FtsZ ring formation; modulates the frequency and position of FtsZ ring formation. Inhibits FtsZ ring formation at polar sites. Interacts either with FtsZ or with one of its binding partners to promote depolymerization.</text>
</comment>
<comment type="interaction">
    <interactant intactId="EBI-1567579">
        <id>O34894</id>
    </interactant>
    <interactant intactId="EBI-2122615">
        <id>P28264</id>
        <label>ftsA</label>
    </interactant>
    <organismsDiffer>false</organismsDiffer>
    <experiments>5</experiments>
</comment>
<comment type="interaction">
    <interactant intactId="EBI-1567579">
        <id>O34894</id>
    </interactant>
    <interactant intactId="EBI-1569853">
        <id>P17865</id>
        <label>ftsZ</label>
    </interactant>
    <organismsDiffer>false</organismsDiffer>
    <experiments>4</experiments>
</comment>
<comment type="subcellular location">
    <subcellularLocation>
        <location evidence="4 6 10">Cell membrane</location>
        <topology evidence="1">Single-pass membrane protein</topology>
    </subcellularLocation>
    <subcellularLocation>
        <location evidence="4 6">Membrane raft</location>
        <topology evidence="1">Single-pass membrane protein</topology>
    </subcellularLocation>
    <text evidence="3 4 6">Cell membrane associated, also colocalizes with FtsZ to the nascent septal site (PubMed:10449747). Present in detergent-resistant membrane (DRM) fractions that may be equivalent to eukaryotic membrane rafts; these rafts include proteins involved in signaling, molecule trafficking and protein secretion (PubMed:22882210, PubMed:24222488).</text>
</comment>
<comment type="PTM">
    <text evidence="11">May be degraded by FtsH protease.</text>
</comment>
<comment type="disruption phenotype">
    <text evidence="3 5 7">Suppresses temperature-sensitive mutation in FtsZ, in a wild-type FtsZ background increases the number and alters the position of FtsZ rings (PubMed:10449747). In minimal medium cells elongate and occasionally form minicells. Double dynA-ezrA mutants have longer cells with more double septa than either deletion alone (PubMed:23249255). Mutant is hypersensitive to tetracycline (PubMed:25954268).</text>
</comment>
<comment type="similarity">
    <text evidence="2">Belongs to the EzrA family.</text>
</comment>
<gene>
    <name evidence="8" type="primary">ezrA</name>
    <name type="synonym">ytwP</name>
    <name type="ordered locus">BSU29610</name>
</gene>
<organism>
    <name type="scientific">Bacillus subtilis (strain 168)</name>
    <dbReference type="NCBI Taxonomy" id="224308"/>
    <lineage>
        <taxon>Bacteria</taxon>
        <taxon>Bacillati</taxon>
        <taxon>Bacillota</taxon>
        <taxon>Bacilli</taxon>
        <taxon>Bacillales</taxon>
        <taxon>Bacillaceae</taxon>
        <taxon>Bacillus</taxon>
    </lineage>
</organism>
<reference key="1">
    <citation type="journal article" date="1997" name="Microbiology">
        <title>Sequencing and functional annotation of the Bacillus subtilis genes in the 200 kb rrnB-dnaB region.</title>
        <authorList>
            <person name="Lapidus A."/>
            <person name="Galleron N."/>
            <person name="Sorokin A."/>
            <person name="Ehrlich S.D."/>
        </authorList>
    </citation>
    <scope>NUCLEOTIDE SEQUENCE [GENOMIC DNA]</scope>
    <source>
        <strain>168</strain>
    </source>
</reference>
<reference key="2">
    <citation type="journal article" date="1997" name="Nature">
        <title>The complete genome sequence of the Gram-positive bacterium Bacillus subtilis.</title>
        <authorList>
            <person name="Kunst F."/>
            <person name="Ogasawara N."/>
            <person name="Moszer I."/>
            <person name="Albertini A.M."/>
            <person name="Alloni G."/>
            <person name="Azevedo V."/>
            <person name="Bertero M.G."/>
            <person name="Bessieres P."/>
            <person name="Bolotin A."/>
            <person name="Borchert S."/>
            <person name="Borriss R."/>
            <person name="Boursier L."/>
            <person name="Brans A."/>
            <person name="Braun M."/>
            <person name="Brignell S.C."/>
            <person name="Bron S."/>
            <person name="Brouillet S."/>
            <person name="Bruschi C.V."/>
            <person name="Caldwell B."/>
            <person name="Capuano V."/>
            <person name="Carter N.M."/>
            <person name="Choi S.-K."/>
            <person name="Codani J.-J."/>
            <person name="Connerton I.F."/>
            <person name="Cummings N.J."/>
            <person name="Daniel R.A."/>
            <person name="Denizot F."/>
            <person name="Devine K.M."/>
            <person name="Duesterhoeft A."/>
            <person name="Ehrlich S.D."/>
            <person name="Emmerson P.T."/>
            <person name="Entian K.-D."/>
            <person name="Errington J."/>
            <person name="Fabret C."/>
            <person name="Ferrari E."/>
            <person name="Foulger D."/>
            <person name="Fritz C."/>
            <person name="Fujita M."/>
            <person name="Fujita Y."/>
            <person name="Fuma S."/>
            <person name="Galizzi A."/>
            <person name="Galleron N."/>
            <person name="Ghim S.-Y."/>
            <person name="Glaser P."/>
            <person name="Goffeau A."/>
            <person name="Golightly E.J."/>
            <person name="Grandi G."/>
            <person name="Guiseppi G."/>
            <person name="Guy B.J."/>
            <person name="Haga K."/>
            <person name="Haiech J."/>
            <person name="Harwood C.R."/>
            <person name="Henaut A."/>
            <person name="Hilbert H."/>
            <person name="Holsappel S."/>
            <person name="Hosono S."/>
            <person name="Hullo M.-F."/>
            <person name="Itaya M."/>
            <person name="Jones L.-M."/>
            <person name="Joris B."/>
            <person name="Karamata D."/>
            <person name="Kasahara Y."/>
            <person name="Klaerr-Blanchard M."/>
            <person name="Klein C."/>
            <person name="Kobayashi Y."/>
            <person name="Koetter P."/>
            <person name="Koningstein G."/>
            <person name="Krogh S."/>
            <person name="Kumano M."/>
            <person name="Kurita K."/>
            <person name="Lapidus A."/>
            <person name="Lardinois S."/>
            <person name="Lauber J."/>
            <person name="Lazarevic V."/>
            <person name="Lee S.-M."/>
            <person name="Levine A."/>
            <person name="Liu H."/>
            <person name="Masuda S."/>
            <person name="Mauel C."/>
            <person name="Medigue C."/>
            <person name="Medina N."/>
            <person name="Mellado R.P."/>
            <person name="Mizuno M."/>
            <person name="Moestl D."/>
            <person name="Nakai S."/>
            <person name="Noback M."/>
            <person name="Noone D."/>
            <person name="O'Reilly M."/>
            <person name="Ogawa K."/>
            <person name="Ogiwara A."/>
            <person name="Oudega B."/>
            <person name="Park S.-H."/>
            <person name="Parro V."/>
            <person name="Pohl T.M."/>
            <person name="Portetelle D."/>
            <person name="Porwollik S."/>
            <person name="Prescott A.M."/>
            <person name="Presecan E."/>
            <person name="Pujic P."/>
            <person name="Purnelle B."/>
            <person name="Rapoport G."/>
            <person name="Rey M."/>
            <person name="Reynolds S."/>
            <person name="Rieger M."/>
            <person name="Rivolta C."/>
            <person name="Rocha E."/>
            <person name="Roche B."/>
            <person name="Rose M."/>
            <person name="Sadaie Y."/>
            <person name="Sato T."/>
            <person name="Scanlan E."/>
            <person name="Schleich S."/>
            <person name="Schroeter R."/>
            <person name="Scoffone F."/>
            <person name="Sekiguchi J."/>
            <person name="Sekowska A."/>
            <person name="Seror S.J."/>
            <person name="Serror P."/>
            <person name="Shin B.-S."/>
            <person name="Soldo B."/>
            <person name="Sorokin A."/>
            <person name="Tacconi E."/>
            <person name="Takagi T."/>
            <person name="Takahashi H."/>
            <person name="Takemaru K."/>
            <person name="Takeuchi M."/>
            <person name="Tamakoshi A."/>
            <person name="Tanaka T."/>
            <person name="Terpstra P."/>
            <person name="Tognoni A."/>
            <person name="Tosato V."/>
            <person name="Uchiyama S."/>
            <person name="Vandenbol M."/>
            <person name="Vannier F."/>
            <person name="Vassarotti A."/>
            <person name="Viari A."/>
            <person name="Wambutt R."/>
            <person name="Wedler E."/>
            <person name="Wedler H."/>
            <person name="Weitzenegger T."/>
            <person name="Winters P."/>
            <person name="Wipat A."/>
            <person name="Yamamoto H."/>
            <person name="Yamane K."/>
            <person name="Yasumoto K."/>
            <person name="Yata K."/>
            <person name="Yoshida K."/>
            <person name="Yoshikawa H.-F."/>
            <person name="Zumstein E."/>
            <person name="Yoshikawa H."/>
            <person name="Danchin A."/>
        </authorList>
    </citation>
    <scope>NUCLEOTIDE SEQUENCE [LARGE SCALE GENOMIC DNA]</scope>
    <source>
        <strain>168</strain>
    </source>
</reference>
<reference key="3">
    <citation type="journal article" date="1999" name="Proc. Natl. Acad. Sci. U.S.A.">
        <title>Identification and characterization of a negative regulator of FtsZ ring formation in Bacillus subtilis.</title>
        <authorList>
            <person name="Levin P.A."/>
            <person name="Kurtser I.G."/>
            <person name="Grossman A.D."/>
        </authorList>
    </citation>
    <scope>FUNCTION</scope>
    <scope>SUBCELLULAR LOCATION</scope>
    <scope>DISRUPTION PHENOTYPE</scope>
    <scope>TOPOLOGY</scope>
    <source>
        <strain>168 / JH642</strain>
    </source>
</reference>
<reference key="4">
    <citation type="journal article" date="2012" name="Mol. Microbiol.">
        <title>The biofilm formation defect of a Bacillus subtilis flotillin-defective mutant involves the protease FtsH.</title>
        <authorList>
            <person name="Yepes A."/>
            <person name="Schneider J."/>
            <person name="Mielich B."/>
            <person name="Koch G."/>
            <person name="Garcia-Betancur J.C."/>
            <person name="Ramamurthi K.S."/>
            <person name="Vlamakis H."/>
            <person name="Lopez D."/>
        </authorList>
    </citation>
    <scope>SUBCELLULAR LOCATION</scope>
    <source>
        <strain>168 / Marburg / ATCC 6051 / DSM 10 / JCM 1465 / NBRC 13719 / NCIMB 3610 / NRRL NRS-744 / VKM B-501</strain>
    </source>
</reference>
<reference key="5">
    <citation type="journal article" date="2012" name="BMC Microbiol.">
        <title>The deletion of bacterial dynamin and flotillin genes results in pleiotrophic effects on cell division, cell growth and in cell shape maintenance.</title>
        <authorList>
            <person name="Dempwolff F."/>
            <person name="Wischhusen H.M."/>
            <person name="Specht M."/>
            <person name="Graumann P.L."/>
        </authorList>
    </citation>
    <scope>DISRUPTION PHENOTYPE</scope>
    <source>
        <strain>168 / PY79</strain>
    </source>
</reference>
<reference key="6">
    <citation type="journal article" date="2013" name="MBio">
        <title>Overproduction of flotillin influences cell differentiation and shape in Bacillus subtilis.</title>
        <authorList>
            <person name="Mielich-Suess B."/>
            <person name="Schneider J."/>
            <person name="Lopez D."/>
        </authorList>
    </citation>
    <scope>SUBCELLULAR LOCATION</scope>
    <scope>POSSIBLE DEGRADATION BY FTSH</scope>
    <source>
        <strain>168 / PY79</strain>
    </source>
</reference>
<reference key="7">
    <citation type="journal article" date="2015" name="Front. Microbiol.">
        <title>Tetracycline hypersensitivity of an ezrA mutant links GalE and TseB (YpmB) to cell division.</title>
        <authorList>
            <person name="Gamba P."/>
            <person name="Rietkoetter E."/>
            <person name="Daniel R.A."/>
            <person name="Hamoen L.W."/>
        </authorList>
    </citation>
    <scope>DISRUPTION PHENOTYPE</scope>
</reference>
<accession>O34894</accession>
<name>EZRA_BACSU</name>
<feature type="chain" id="PRO_0000172870" description="Septation ring formation regulator EzrA">
    <location>
        <begin position="1"/>
        <end position="562"/>
    </location>
</feature>
<feature type="topological domain" description="Extracellular" evidence="9">
    <location>
        <begin position="1"/>
        <end position="2"/>
    </location>
</feature>
<feature type="transmembrane region" description="Helical" evidence="1">
    <location>
        <begin position="3"/>
        <end position="21"/>
    </location>
</feature>
<feature type="topological domain" description="Cytoplasmic" evidence="10">
    <location>
        <begin position="22"/>
        <end position="562"/>
    </location>
</feature>
<feature type="coiled-coil region" evidence="2">
    <location>
        <begin position="377"/>
        <end position="425"/>
    </location>
</feature>
<feature type="coiled-coil region" evidence="2">
    <location>
        <begin position="470"/>
        <end position="497"/>
    </location>
</feature>
<keyword id="KW-0002">3D-structure</keyword>
<keyword id="KW-0131">Cell cycle</keyword>
<keyword id="KW-0132">Cell division</keyword>
<keyword id="KW-1003">Cell membrane</keyword>
<keyword id="KW-0175">Coiled coil</keyword>
<keyword id="KW-0472">Membrane</keyword>
<keyword id="KW-1185">Reference proteome</keyword>
<keyword id="KW-0717">Septation</keyword>
<keyword id="KW-0812">Transmembrane</keyword>
<keyword id="KW-1133">Transmembrane helix</keyword>